<dbReference type="EC" id="2.1.2.1" evidence="1"/>
<dbReference type="EMBL" id="CP000950">
    <property type="protein sequence ID" value="ACA67563.1"/>
    <property type="molecule type" value="Genomic_DNA"/>
</dbReference>
<dbReference type="RefSeq" id="WP_002211552.1">
    <property type="nucleotide sequence ID" value="NZ_CP009792.1"/>
</dbReference>
<dbReference type="SMR" id="B1JRX7"/>
<dbReference type="GeneID" id="57975864"/>
<dbReference type="KEGG" id="ypy:YPK_1265"/>
<dbReference type="PATRIC" id="fig|502800.11.peg.1901"/>
<dbReference type="UniPathway" id="UPA00193"/>
<dbReference type="UniPathway" id="UPA00288">
    <property type="reaction ID" value="UER01023"/>
</dbReference>
<dbReference type="GO" id="GO:0005829">
    <property type="term" value="C:cytosol"/>
    <property type="evidence" value="ECO:0007669"/>
    <property type="project" value="TreeGrafter"/>
</dbReference>
<dbReference type="GO" id="GO:0004372">
    <property type="term" value="F:glycine hydroxymethyltransferase activity"/>
    <property type="evidence" value="ECO:0007669"/>
    <property type="project" value="UniProtKB-UniRule"/>
</dbReference>
<dbReference type="GO" id="GO:0030170">
    <property type="term" value="F:pyridoxal phosphate binding"/>
    <property type="evidence" value="ECO:0007669"/>
    <property type="project" value="UniProtKB-UniRule"/>
</dbReference>
<dbReference type="GO" id="GO:0019264">
    <property type="term" value="P:glycine biosynthetic process from serine"/>
    <property type="evidence" value="ECO:0007669"/>
    <property type="project" value="UniProtKB-UniRule"/>
</dbReference>
<dbReference type="GO" id="GO:0035999">
    <property type="term" value="P:tetrahydrofolate interconversion"/>
    <property type="evidence" value="ECO:0007669"/>
    <property type="project" value="UniProtKB-UniRule"/>
</dbReference>
<dbReference type="CDD" id="cd00378">
    <property type="entry name" value="SHMT"/>
    <property type="match status" value="1"/>
</dbReference>
<dbReference type="FunFam" id="3.40.640.10:FF:000001">
    <property type="entry name" value="Serine hydroxymethyltransferase"/>
    <property type="match status" value="1"/>
</dbReference>
<dbReference type="FunFam" id="3.90.1150.10:FF:000003">
    <property type="entry name" value="Serine hydroxymethyltransferase"/>
    <property type="match status" value="1"/>
</dbReference>
<dbReference type="Gene3D" id="3.90.1150.10">
    <property type="entry name" value="Aspartate Aminotransferase, domain 1"/>
    <property type="match status" value="1"/>
</dbReference>
<dbReference type="Gene3D" id="3.40.640.10">
    <property type="entry name" value="Type I PLP-dependent aspartate aminotransferase-like (Major domain)"/>
    <property type="match status" value="1"/>
</dbReference>
<dbReference type="HAMAP" id="MF_00051">
    <property type="entry name" value="SHMT"/>
    <property type="match status" value="1"/>
</dbReference>
<dbReference type="InterPro" id="IPR015424">
    <property type="entry name" value="PyrdxlP-dep_Trfase"/>
</dbReference>
<dbReference type="InterPro" id="IPR015421">
    <property type="entry name" value="PyrdxlP-dep_Trfase_major"/>
</dbReference>
<dbReference type="InterPro" id="IPR015422">
    <property type="entry name" value="PyrdxlP-dep_Trfase_small"/>
</dbReference>
<dbReference type="InterPro" id="IPR001085">
    <property type="entry name" value="Ser_HO-MeTrfase"/>
</dbReference>
<dbReference type="InterPro" id="IPR049943">
    <property type="entry name" value="Ser_HO-MeTrfase-like"/>
</dbReference>
<dbReference type="InterPro" id="IPR019798">
    <property type="entry name" value="Ser_HO-MeTrfase_PLP_BS"/>
</dbReference>
<dbReference type="InterPro" id="IPR039429">
    <property type="entry name" value="SHMT-like_dom"/>
</dbReference>
<dbReference type="NCBIfam" id="NF000586">
    <property type="entry name" value="PRK00011.1"/>
    <property type="match status" value="1"/>
</dbReference>
<dbReference type="PANTHER" id="PTHR11680">
    <property type="entry name" value="SERINE HYDROXYMETHYLTRANSFERASE"/>
    <property type="match status" value="1"/>
</dbReference>
<dbReference type="PANTHER" id="PTHR11680:SF50">
    <property type="entry name" value="SERINE HYDROXYMETHYLTRANSFERASE"/>
    <property type="match status" value="1"/>
</dbReference>
<dbReference type="Pfam" id="PF00464">
    <property type="entry name" value="SHMT"/>
    <property type="match status" value="1"/>
</dbReference>
<dbReference type="PIRSF" id="PIRSF000412">
    <property type="entry name" value="SHMT"/>
    <property type="match status" value="1"/>
</dbReference>
<dbReference type="SUPFAM" id="SSF53383">
    <property type="entry name" value="PLP-dependent transferases"/>
    <property type="match status" value="1"/>
</dbReference>
<dbReference type="PROSITE" id="PS00096">
    <property type="entry name" value="SHMT"/>
    <property type="match status" value="1"/>
</dbReference>
<sequence length="417" mass="45422">MLKREMNIADYDADLWRAMEQEVVRQEEHIELIASENYTSPRVMQAQGSQLTNKYAEGYPGKRYYGGCEYVDVVEQLAIDRAKALFGADYANVQPHSGSQANVAVYSALLKPGDTVLGMNLAHGGHLTHGSPVNFSGKLYNIVPYGIDESGQIDYEDLARQAEIHKPKMIIGGFSAYSGIVDWAKMREIADSIDAWFFVDMAHVAGLVAAGVYPNPVPHAHIVTTTTHKTLAGPRGGLILAKGGDEDLYKKLNSSVFPGNQGGPLMHVIAGKAVALKEAMEPEFKIYQQQVAKNAKAMVAVFLERGYKVVSGGTDNHLFLLDLVDKDITGKDADAALGRANITVNKNSVPNDPKSPFVTSGVRIGSPAITRRGFKEAESRELAGWMCDVLDNINDEATIERVKQKVLAICARLPVYA</sequence>
<comment type="function">
    <text evidence="1">Catalyzes the reversible interconversion of serine and glycine with tetrahydrofolate (THF) serving as the one-carbon carrier. This reaction serves as the major source of one-carbon groups required for the biosynthesis of purines, thymidylate, methionine, and other important biomolecules. Also exhibits THF-independent aldolase activity toward beta-hydroxyamino acids, producing glycine and aldehydes, via a retro-aldol mechanism.</text>
</comment>
<comment type="catalytic activity">
    <reaction evidence="1">
        <text>(6R)-5,10-methylene-5,6,7,8-tetrahydrofolate + glycine + H2O = (6S)-5,6,7,8-tetrahydrofolate + L-serine</text>
        <dbReference type="Rhea" id="RHEA:15481"/>
        <dbReference type="ChEBI" id="CHEBI:15377"/>
        <dbReference type="ChEBI" id="CHEBI:15636"/>
        <dbReference type="ChEBI" id="CHEBI:33384"/>
        <dbReference type="ChEBI" id="CHEBI:57305"/>
        <dbReference type="ChEBI" id="CHEBI:57453"/>
        <dbReference type="EC" id="2.1.2.1"/>
    </reaction>
</comment>
<comment type="cofactor">
    <cofactor evidence="1">
        <name>pyridoxal 5'-phosphate</name>
        <dbReference type="ChEBI" id="CHEBI:597326"/>
    </cofactor>
</comment>
<comment type="pathway">
    <text evidence="1">One-carbon metabolism; tetrahydrofolate interconversion.</text>
</comment>
<comment type="pathway">
    <text evidence="1">Amino-acid biosynthesis; glycine biosynthesis; glycine from L-serine: step 1/1.</text>
</comment>
<comment type="subunit">
    <text evidence="1">Homodimer.</text>
</comment>
<comment type="subcellular location">
    <subcellularLocation>
        <location evidence="1">Cytoplasm</location>
    </subcellularLocation>
</comment>
<comment type="similarity">
    <text evidence="1">Belongs to the SHMT family.</text>
</comment>
<proteinExistence type="inferred from homology"/>
<name>GLYA_YERPY</name>
<feature type="chain" id="PRO_1000091601" description="Serine hydroxymethyltransferase">
    <location>
        <begin position="1"/>
        <end position="417"/>
    </location>
</feature>
<feature type="binding site" evidence="1">
    <location>
        <position position="121"/>
    </location>
    <ligand>
        <name>(6S)-5,6,7,8-tetrahydrofolate</name>
        <dbReference type="ChEBI" id="CHEBI:57453"/>
    </ligand>
</feature>
<feature type="binding site" evidence="1">
    <location>
        <begin position="125"/>
        <end position="127"/>
    </location>
    <ligand>
        <name>(6S)-5,6,7,8-tetrahydrofolate</name>
        <dbReference type="ChEBI" id="CHEBI:57453"/>
    </ligand>
</feature>
<feature type="binding site" evidence="1">
    <location>
        <begin position="355"/>
        <end position="357"/>
    </location>
    <ligand>
        <name>(6S)-5,6,7,8-tetrahydrofolate</name>
        <dbReference type="ChEBI" id="CHEBI:57453"/>
    </ligand>
</feature>
<feature type="site" description="Plays an important role in substrate specificity" evidence="1">
    <location>
        <position position="228"/>
    </location>
</feature>
<feature type="modified residue" description="N6-(pyridoxal phosphate)lysine" evidence="1">
    <location>
        <position position="229"/>
    </location>
</feature>
<protein>
    <recommendedName>
        <fullName evidence="1">Serine hydroxymethyltransferase</fullName>
        <shortName evidence="1">SHMT</shortName>
        <shortName evidence="1">Serine methylase</shortName>
        <ecNumber evidence="1">2.1.2.1</ecNumber>
    </recommendedName>
</protein>
<accession>B1JRX7</accession>
<evidence type="ECO:0000255" key="1">
    <source>
        <dbReference type="HAMAP-Rule" id="MF_00051"/>
    </source>
</evidence>
<keyword id="KW-0028">Amino-acid biosynthesis</keyword>
<keyword id="KW-0963">Cytoplasm</keyword>
<keyword id="KW-0554">One-carbon metabolism</keyword>
<keyword id="KW-0663">Pyridoxal phosphate</keyword>
<keyword id="KW-0808">Transferase</keyword>
<organism>
    <name type="scientific">Yersinia pseudotuberculosis serotype O:3 (strain YPIII)</name>
    <dbReference type="NCBI Taxonomy" id="502800"/>
    <lineage>
        <taxon>Bacteria</taxon>
        <taxon>Pseudomonadati</taxon>
        <taxon>Pseudomonadota</taxon>
        <taxon>Gammaproteobacteria</taxon>
        <taxon>Enterobacterales</taxon>
        <taxon>Yersiniaceae</taxon>
        <taxon>Yersinia</taxon>
    </lineage>
</organism>
<reference key="1">
    <citation type="submission" date="2008-02" db="EMBL/GenBank/DDBJ databases">
        <title>Complete sequence of Yersinia pseudotuberculosis YPIII.</title>
        <authorList>
            <consortium name="US DOE Joint Genome Institute"/>
            <person name="Copeland A."/>
            <person name="Lucas S."/>
            <person name="Lapidus A."/>
            <person name="Glavina del Rio T."/>
            <person name="Dalin E."/>
            <person name="Tice H."/>
            <person name="Bruce D."/>
            <person name="Goodwin L."/>
            <person name="Pitluck S."/>
            <person name="Munk A.C."/>
            <person name="Brettin T."/>
            <person name="Detter J.C."/>
            <person name="Han C."/>
            <person name="Tapia R."/>
            <person name="Schmutz J."/>
            <person name="Larimer F."/>
            <person name="Land M."/>
            <person name="Hauser L."/>
            <person name="Challacombe J.F."/>
            <person name="Green L."/>
            <person name="Lindler L.E."/>
            <person name="Nikolich M.P."/>
            <person name="Richardson P."/>
        </authorList>
    </citation>
    <scope>NUCLEOTIDE SEQUENCE [LARGE SCALE GENOMIC DNA]</scope>
    <source>
        <strain>YPIII</strain>
    </source>
</reference>
<gene>
    <name evidence="1" type="primary">glyA</name>
    <name type="ordered locus">YPK_1265</name>
</gene>